<name>TTUD4_AGRVI</name>
<gene>
    <name type="primary">ttuD</name>
</gene>
<accession>Q44472</accession>
<protein>
    <recommendedName>
        <fullName>Putative hydroxypyruvate reductase</fullName>
        <ecNumber>1.1.1.81</ecNumber>
    </recommendedName>
</protein>
<feature type="chain" id="PRO_0000065682" description="Putative hydroxypyruvate reductase">
    <location>
        <begin position="1"/>
        <end position="438"/>
    </location>
</feature>
<proteinExistence type="evidence at transcript level"/>
<organism>
    <name type="scientific">Agrobacterium vitis</name>
    <name type="common">Rhizobium vitis</name>
    <dbReference type="NCBI Taxonomy" id="373"/>
    <lineage>
        <taxon>Bacteria</taxon>
        <taxon>Pseudomonadati</taxon>
        <taxon>Pseudomonadota</taxon>
        <taxon>Alphaproteobacteria</taxon>
        <taxon>Hyphomicrobiales</taxon>
        <taxon>Rhizobiaceae</taxon>
        <taxon>Rhizobium/Agrobacterium group</taxon>
        <taxon>Agrobacterium</taxon>
    </lineage>
</organism>
<geneLocation type="plasmid">
    <name>pTrAB4</name>
</geneLocation>
<comment type="function">
    <text>Degrades an unidentified toxic product from the first step of tartrate degradation.</text>
</comment>
<comment type="catalytic activity">
    <reaction>
        <text>(R)-glycerate + NAD(+) = 3-hydroxypyruvate + NADH + H(+)</text>
        <dbReference type="Rhea" id="RHEA:17905"/>
        <dbReference type="ChEBI" id="CHEBI:15378"/>
        <dbReference type="ChEBI" id="CHEBI:16659"/>
        <dbReference type="ChEBI" id="CHEBI:17180"/>
        <dbReference type="ChEBI" id="CHEBI:57540"/>
        <dbReference type="ChEBI" id="CHEBI:57945"/>
        <dbReference type="EC" id="1.1.1.81"/>
    </reaction>
</comment>
<comment type="catalytic activity">
    <reaction>
        <text>(R)-glycerate + NADP(+) = 3-hydroxypyruvate + NADPH + H(+)</text>
        <dbReference type="Rhea" id="RHEA:18657"/>
        <dbReference type="ChEBI" id="CHEBI:15378"/>
        <dbReference type="ChEBI" id="CHEBI:16659"/>
        <dbReference type="ChEBI" id="CHEBI:17180"/>
        <dbReference type="ChEBI" id="CHEBI:57783"/>
        <dbReference type="ChEBI" id="CHEBI:58349"/>
        <dbReference type="EC" id="1.1.1.81"/>
    </reaction>
</comment>
<comment type="pathway">
    <text>Carbohydrate acid metabolism; tartrate degradation; 3-hydroxypyruvate from D-glycerate: step 1/1.</text>
</comment>
<comment type="induction">
    <text>By tartrate.</text>
</comment>
<sequence length="438" mass="44730">MQRNRRIEYLEDGRCRMTWNDVSARQVLRRIFDAAVASADPKIAVVNNLPERPRGRCVVVGAGKASAAMAAAVDAAWPDVDLSGIVVTRYGHAVPAGRIEILEASHPVPDEMSIKAAEKIFAAVQGLGPDDLVVALISGGGSSLLVSPTGKMTLTDKRAVNQALLASGATISEMNTVRKHLSAIKGGHLARAALPAKLVTLIISDVPGDDPSEIASGPTVADPTTLADAAAIIARYGIDLPESARAVLVQGNETPKAGEVAGEIRLVAAPSIALEAAAAAALDAGLCPLILGDALEGEAREMGRVMAGIALSARDKGLPVAAPAVILSGGESTVSLGAMTEGRGGRNTEFLLSLAVALKGASGIWAIAGDTDGIDGVEDAAGALVAPDSLIRMRDAGIDPRATLSAHDSYTAFKAIGDLVVTGPTLTNVNDIRAILIG</sequence>
<dbReference type="EC" id="1.1.1.81"/>
<dbReference type="EMBL" id="U25634">
    <property type="protein sequence ID" value="AAA68699.1"/>
    <property type="molecule type" value="Genomic_DNA"/>
</dbReference>
<dbReference type="SMR" id="Q44472"/>
<dbReference type="UniPathway" id="UPA00839">
    <property type="reaction ID" value="UER00804"/>
</dbReference>
<dbReference type="GO" id="GO:0005737">
    <property type="term" value="C:cytoplasm"/>
    <property type="evidence" value="ECO:0007669"/>
    <property type="project" value="TreeGrafter"/>
</dbReference>
<dbReference type="GO" id="GO:0008887">
    <property type="term" value="F:glycerate kinase activity"/>
    <property type="evidence" value="ECO:0007669"/>
    <property type="project" value="InterPro"/>
</dbReference>
<dbReference type="GO" id="GO:0008465">
    <property type="term" value="F:hydroxypyruvate reductase (NADH) activity"/>
    <property type="evidence" value="ECO:0007669"/>
    <property type="project" value="RHEA"/>
</dbReference>
<dbReference type="GO" id="GO:0120509">
    <property type="term" value="F:hydroxypyruvate reductase (NADPH) activity"/>
    <property type="evidence" value="ECO:0007669"/>
    <property type="project" value="RHEA"/>
</dbReference>
<dbReference type="Gene3D" id="3.40.50.10180">
    <property type="entry name" value="Glycerate kinase, MOFRL-like N-terminal domain"/>
    <property type="match status" value="1"/>
</dbReference>
<dbReference type="Gene3D" id="3.40.1480.10">
    <property type="entry name" value="MOFRL domain"/>
    <property type="match status" value="1"/>
</dbReference>
<dbReference type="InterPro" id="IPR037035">
    <property type="entry name" value="GK-like_C_sf"/>
</dbReference>
<dbReference type="InterPro" id="IPR038614">
    <property type="entry name" value="GK_N_sf"/>
</dbReference>
<dbReference type="InterPro" id="IPR007835">
    <property type="entry name" value="MOFRL"/>
</dbReference>
<dbReference type="InterPro" id="IPR025286">
    <property type="entry name" value="MOFRL_assoc_dom"/>
</dbReference>
<dbReference type="InterPro" id="IPR039760">
    <property type="entry name" value="MOFRL_protein"/>
</dbReference>
<dbReference type="PANTHER" id="PTHR12227">
    <property type="entry name" value="GLYCERATE KINASE"/>
    <property type="match status" value="1"/>
</dbReference>
<dbReference type="PANTHER" id="PTHR12227:SF0">
    <property type="entry name" value="GLYCERATE KINASE"/>
    <property type="match status" value="1"/>
</dbReference>
<dbReference type="Pfam" id="PF13660">
    <property type="entry name" value="DUF4147"/>
    <property type="match status" value="1"/>
</dbReference>
<dbReference type="Pfam" id="PF05161">
    <property type="entry name" value="MOFRL"/>
    <property type="match status" value="1"/>
</dbReference>
<dbReference type="SUPFAM" id="SSF82544">
    <property type="entry name" value="GckA/TtuD-like"/>
    <property type="match status" value="1"/>
</dbReference>
<keyword id="KW-0521">NADP</keyword>
<keyword id="KW-0560">Oxidoreductase</keyword>
<keyword id="KW-0614">Plasmid</keyword>
<reference key="1">
    <citation type="journal article" date="1995" name="J. Bacteriol.">
        <title>Sequence and mutational analysis of a tartrate utilization operon from Agrobacterium vitis.</title>
        <authorList>
            <person name="Crouzet P."/>
            <person name="Otten L."/>
        </authorList>
    </citation>
    <scope>NUCLEOTIDE SEQUENCE [GENOMIC DNA]</scope>
    <source>
        <strain>AB4</strain>
    </source>
</reference>